<feature type="chain" id="PRO_0000144888" description="L-aspartate dehydrogenase">
    <location>
        <begin position="1"/>
        <end position="271"/>
    </location>
</feature>
<feature type="active site" evidence="1">
    <location>
        <position position="224"/>
    </location>
</feature>
<feature type="binding site" evidence="1">
    <location>
        <position position="128"/>
    </location>
    <ligand>
        <name>NAD(+)</name>
        <dbReference type="ChEBI" id="CHEBI:57540"/>
    </ligand>
</feature>
<feature type="binding site" evidence="1">
    <location>
        <position position="194"/>
    </location>
    <ligand>
        <name>NAD(+)</name>
        <dbReference type="ChEBI" id="CHEBI:57540"/>
    </ligand>
</feature>
<sequence length="271" mass="27747">MRNAHAPVDVAMIGFGAIGAAVYRAVEHDAALRVAHVIVPEHQCDAVRGALGERVDVVSSVDALACRPQFALECAGHGALVDHVVPLLKAGTDCAVASIGALSDLALLDALSNAADAGGATLTLLSGAIGGIDALAAARQGGLDEVRYIGRKPPLGWLGTPAEAICDLRAMAAEQTIFEGSARDAAQLYPRNANVAATVALAGVGLDATRVCLIADPAVTRNVHRIVARGAFGEMSIEMSGKPLPDNPKTSALTAFSAIRALRNRASHCVI</sequence>
<accession>Q62BI3</accession>
<protein>
    <recommendedName>
        <fullName evidence="1">L-aspartate dehydrogenase</fullName>
        <ecNumber evidence="1">1.4.1.21</ecNumber>
    </recommendedName>
</protein>
<organism>
    <name type="scientific">Burkholderia mallei (strain ATCC 23344)</name>
    <dbReference type="NCBI Taxonomy" id="243160"/>
    <lineage>
        <taxon>Bacteria</taxon>
        <taxon>Pseudomonadati</taxon>
        <taxon>Pseudomonadota</taxon>
        <taxon>Betaproteobacteria</taxon>
        <taxon>Burkholderiales</taxon>
        <taxon>Burkholderiaceae</taxon>
        <taxon>Burkholderia</taxon>
        <taxon>pseudomallei group</taxon>
    </lineage>
</organism>
<evidence type="ECO:0000255" key="1">
    <source>
        <dbReference type="HAMAP-Rule" id="MF_01265"/>
    </source>
</evidence>
<gene>
    <name evidence="1" type="primary">nadX</name>
    <name type="ordered locus">BMAA1329</name>
</gene>
<dbReference type="EC" id="1.4.1.21" evidence="1"/>
<dbReference type="EMBL" id="CP000011">
    <property type="protein sequence ID" value="AAU46671.1"/>
    <property type="molecule type" value="Genomic_DNA"/>
</dbReference>
<dbReference type="RefSeq" id="WP_004195445.1">
    <property type="nucleotide sequence ID" value="NC_006349.2"/>
</dbReference>
<dbReference type="RefSeq" id="YP_105945.1">
    <property type="nucleotide sequence ID" value="NC_006349.2"/>
</dbReference>
<dbReference type="SMR" id="Q62BI3"/>
<dbReference type="KEGG" id="bma:BMAA1329"/>
<dbReference type="PATRIC" id="fig|243160.12.peg.4889"/>
<dbReference type="eggNOG" id="COG1712">
    <property type="taxonomic scope" value="Bacteria"/>
</dbReference>
<dbReference type="HOGENOM" id="CLU_089550_0_0_4"/>
<dbReference type="UniPathway" id="UPA00253">
    <property type="reaction ID" value="UER00456"/>
</dbReference>
<dbReference type="Proteomes" id="UP000006693">
    <property type="component" value="Chromosome 2"/>
</dbReference>
<dbReference type="GO" id="GO:0033735">
    <property type="term" value="F:aspartate dehydrogenase activity"/>
    <property type="evidence" value="ECO:0007669"/>
    <property type="project" value="UniProtKB-EC"/>
</dbReference>
<dbReference type="GO" id="GO:0051287">
    <property type="term" value="F:NAD binding"/>
    <property type="evidence" value="ECO:0007669"/>
    <property type="project" value="UniProtKB-UniRule"/>
</dbReference>
<dbReference type="GO" id="GO:0050661">
    <property type="term" value="F:NADP binding"/>
    <property type="evidence" value="ECO:0007669"/>
    <property type="project" value="UniProtKB-UniRule"/>
</dbReference>
<dbReference type="GO" id="GO:0016639">
    <property type="term" value="F:oxidoreductase activity, acting on the CH-NH2 group of donors, NAD or NADP as acceptor"/>
    <property type="evidence" value="ECO:0007669"/>
    <property type="project" value="UniProtKB-UniRule"/>
</dbReference>
<dbReference type="GO" id="GO:0009435">
    <property type="term" value="P:NAD biosynthetic process"/>
    <property type="evidence" value="ECO:0007669"/>
    <property type="project" value="UniProtKB-UniRule"/>
</dbReference>
<dbReference type="Gene3D" id="3.30.360.10">
    <property type="entry name" value="Dihydrodipicolinate Reductase, domain 2"/>
    <property type="match status" value="1"/>
</dbReference>
<dbReference type="Gene3D" id="3.40.50.720">
    <property type="entry name" value="NAD(P)-binding Rossmann-like Domain"/>
    <property type="match status" value="1"/>
</dbReference>
<dbReference type="HAMAP" id="MF_01265">
    <property type="entry name" value="NadX"/>
    <property type="match status" value="1"/>
</dbReference>
<dbReference type="InterPro" id="IPR005106">
    <property type="entry name" value="Asp/hSer_DH_NAD-bd"/>
</dbReference>
<dbReference type="InterPro" id="IPR002811">
    <property type="entry name" value="Asp_DH"/>
</dbReference>
<dbReference type="InterPro" id="IPR020626">
    <property type="entry name" value="Asp_DH_prok"/>
</dbReference>
<dbReference type="InterPro" id="IPR011182">
    <property type="entry name" value="L-Asp_DH"/>
</dbReference>
<dbReference type="InterPro" id="IPR036291">
    <property type="entry name" value="NAD(P)-bd_dom_sf"/>
</dbReference>
<dbReference type="NCBIfam" id="NF009826">
    <property type="entry name" value="PRK13303.1-1"/>
    <property type="match status" value="1"/>
</dbReference>
<dbReference type="NCBIfam" id="NF009827">
    <property type="entry name" value="PRK13303.1-2"/>
    <property type="match status" value="1"/>
</dbReference>
<dbReference type="NCBIfam" id="NF009828">
    <property type="entry name" value="PRK13303.1-3"/>
    <property type="match status" value="1"/>
</dbReference>
<dbReference type="PANTHER" id="PTHR31873:SF6">
    <property type="entry name" value="ASPARTATE DEHYDROGENASE DOMAIN-CONTAINING PROTEIN"/>
    <property type="match status" value="1"/>
</dbReference>
<dbReference type="PANTHER" id="PTHR31873">
    <property type="entry name" value="L-ASPARTATE DEHYDROGENASE-RELATED"/>
    <property type="match status" value="1"/>
</dbReference>
<dbReference type="Pfam" id="PF01958">
    <property type="entry name" value="Asp_DH_C"/>
    <property type="match status" value="1"/>
</dbReference>
<dbReference type="Pfam" id="PF03447">
    <property type="entry name" value="NAD_binding_3"/>
    <property type="match status" value="1"/>
</dbReference>
<dbReference type="PIRSF" id="PIRSF005227">
    <property type="entry name" value="Asp_dh_NAD_syn"/>
    <property type="match status" value="1"/>
</dbReference>
<dbReference type="SUPFAM" id="SSF55347">
    <property type="entry name" value="Glyceraldehyde-3-phosphate dehydrogenase-like, C-terminal domain"/>
    <property type="match status" value="1"/>
</dbReference>
<dbReference type="SUPFAM" id="SSF51735">
    <property type="entry name" value="NAD(P)-binding Rossmann-fold domains"/>
    <property type="match status" value="1"/>
</dbReference>
<proteinExistence type="inferred from homology"/>
<reference key="1">
    <citation type="journal article" date="2004" name="Proc. Natl. Acad. Sci. U.S.A.">
        <title>Structural flexibility in the Burkholderia mallei genome.</title>
        <authorList>
            <person name="Nierman W.C."/>
            <person name="DeShazer D."/>
            <person name="Kim H.S."/>
            <person name="Tettelin H."/>
            <person name="Nelson K.E."/>
            <person name="Feldblyum T.V."/>
            <person name="Ulrich R.L."/>
            <person name="Ronning C.M."/>
            <person name="Brinkac L.M."/>
            <person name="Daugherty S.C."/>
            <person name="Davidsen T.D."/>
            <person name="DeBoy R.T."/>
            <person name="Dimitrov G."/>
            <person name="Dodson R.J."/>
            <person name="Durkin A.S."/>
            <person name="Gwinn M.L."/>
            <person name="Haft D.H."/>
            <person name="Khouri H.M."/>
            <person name="Kolonay J.F."/>
            <person name="Madupu R."/>
            <person name="Mohammoud Y."/>
            <person name="Nelson W.C."/>
            <person name="Radune D."/>
            <person name="Romero C.M."/>
            <person name="Sarria S."/>
            <person name="Selengut J."/>
            <person name="Shamblin C."/>
            <person name="Sullivan S.A."/>
            <person name="White O."/>
            <person name="Yu Y."/>
            <person name="Zafar N."/>
            <person name="Zhou L."/>
            <person name="Fraser C.M."/>
        </authorList>
    </citation>
    <scope>NUCLEOTIDE SEQUENCE [LARGE SCALE GENOMIC DNA]</scope>
    <source>
        <strain>ATCC 23344</strain>
    </source>
</reference>
<comment type="function">
    <text evidence="1">Specifically catalyzes the NAD or NADP-dependent dehydrogenation of L-aspartate to iminoaspartate.</text>
</comment>
<comment type="catalytic activity">
    <reaction evidence="1">
        <text>L-aspartate + NADP(+) + H2O = oxaloacetate + NH4(+) + NADPH + H(+)</text>
        <dbReference type="Rhea" id="RHEA:11784"/>
        <dbReference type="ChEBI" id="CHEBI:15377"/>
        <dbReference type="ChEBI" id="CHEBI:15378"/>
        <dbReference type="ChEBI" id="CHEBI:16452"/>
        <dbReference type="ChEBI" id="CHEBI:28938"/>
        <dbReference type="ChEBI" id="CHEBI:29991"/>
        <dbReference type="ChEBI" id="CHEBI:57783"/>
        <dbReference type="ChEBI" id="CHEBI:58349"/>
        <dbReference type="EC" id="1.4.1.21"/>
    </reaction>
</comment>
<comment type="catalytic activity">
    <reaction evidence="1">
        <text>L-aspartate + NAD(+) + H2O = oxaloacetate + NH4(+) + NADH + H(+)</text>
        <dbReference type="Rhea" id="RHEA:11788"/>
        <dbReference type="ChEBI" id="CHEBI:15377"/>
        <dbReference type="ChEBI" id="CHEBI:15378"/>
        <dbReference type="ChEBI" id="CHEBI:16452"/>
        <dbReference type="ChEBI" id="CHEBI:28938"/>
        <dbReference type="ChEBI" id="CHEBI:29991"/>
        <dbReference type="ChEBI" id="CHEBI:57540"/>
        <dbReference type="ChEBI" id="CHEBI:57945"/>
        <dbReference type="EC" id="1.4.1.21"/>
    </reaction>
</comment>
<comment type="pathway">
    <text evidence="1">Cofactor biosynthesis; NAD(+) biosynthesis; iminoaspartate from L-aspartate (dehydrogenase route): step 1/1.</text>
</comment>
<comment type="miscellaneous">
    <text evidence="1">The iminoaspartate product is unstable in aqueous solution and can decompose to oxaloacetate and ammonia.</text>
</comment>
<comment type="similarity">
    <text evidence="1">Belongs to the L-aspartate dehydrogenase family.</text>
</comment>
<keyword id="KW-0520">NAD</keyword>
<keyword id="KW-0521">NADP</keyword>
<keyword id="KW-0560">Oxidoreductase</keyword>
<keyword id="KW-0662">Pyridine nucleotide biosynthesis</keyword>
<keyword id="KW-1185">Reference proteome</keyword>
<name>ASPD_BURMA</name>